<protein>
    <recommendedName>
        <fullName>ATPase synthesis protein 25, mitochondrial</fullName>
    </recommendedName>
</protein>
<name>ATP25_ARTBC</name>
<gene>
    <name type="primary">ATP25</name>
    <name type="ORF">ARB_03267</name>
</gene>
<accession>D4B478</accession>
<dbReference type="EMBL" id="ABSU01000034">
    <property type="protein sequence ID" value="EFE29926.1"/>
    <property type="molecule type" value="Genomic_DNA"/>
</dbReference>
<dbReference type="RefSeq" id="XP_003010566.1">
    <property type="nucleotide sequence ID" value="XM_003010520.1"/>
</dbReference>
<dbReference type="SMR" id="D4B478"/>
<dbReference type="STRING" id="663331.D4B478"/>
<dbReference type="GeneID" id="9524678"/>
<dbReference type="KEGG" id="abe:ARB_03267"/>
<dbReference type="eggNOG" id="ENOG502S5IB">
    <property type="taxonomic scope" value="Eukaryota"/>
</dbReference>
<dbReference type="HOGENOM" id="CLU_016140_0_0_1"/>
<dbReference type="OMA" id="CLSSWVP"/>
<dbReference type="OrthoDB" id="107372at2759"/>
<dbReference type="Proteomes" id="UP000008866">
    <property type="component" value="Unassembled WGS sequence"/>
</dbReference>
<dbReference type="GO" id="GO:0005743">
    <property type="term" value="C:mitochondrial inner membrane"/>
    <property type="evidence" value="ECO:0007669"/>
    <property type="project" value="UniProtKB-SubCell"/>
</dbReference>
<dbReference type="GO" id="GO:0140053">
    <property type="term" value="P:mitochondrial gene expression"/>
    <property type="evidence" value="ECO:0007669"/>
    <property type="project" value="InterPro"/>
</dbReference>
<dbReference type="GO" id="GO:0048255">
    <property type="term" value="P:mRNA stabilization"/>
    <property type="evidence" value="ECO:0007669"/>
    <property type="project" value="TreeGrafter"/>
</dbReference>
<dbReference type="FunFam" id="3.30.460.10:FF:000044">
    <property type="entry name" value="ATPase synthesis protein 25, mitochondrial"/>
    <property type="match status" value="1"/>
</dbReference>
<dbReference type="Gene3D" id="3.30.460.10">
    <property type="entry name" value="Beta Polymerase, domain 2"/>
    <property type="match status" value="1"/>
</dbReference>
<dbReference type="InterPro" id="IPR040152">
    <property type="entry name" value="Atp25"/>
</dbReference>
<dbReference type="InterPro" id="IPR043519">
    <property type="entry name" value="NT_sf"/>
</dbReference>
<dbReference type="PANTHER" id="PTHR28087">
    <property type="entry name" value="ATPASE SYNTHESIS PROTEIN 25, MITOCHONDRIAL"/>
    <property type="match status" value="1"/>
</dbReference>
<dbReference type="PANTHER" id="PTHR28087:SF1">
    <property type="entry name" value="ATPASE SYNTHESIS PROTEIN 25, MITOCHONDRIAL"/>
    <property type="match status" value="1"/>
</dbReference>
<reference key="1">
    <citation type="journal article" date="2011" name="Genome Biol.">
        <title>Comparative and functional genomics provide insights into the pathogenicity of dermatophytic fungi.</title>
        <authorList>
            <person name="Burmester A."/>
            <person name="Shelest E."/>
            <person name="Gloeckner G."/>
            <person name="Heddergott C."/>
            <person name="Schindler S."/>
            <person name="Staib P."/>
            <person name="Heidel A."/>
            <person name="Felder M."/>
            <person name="Petzold A."/>
            <person name="Szafranski K."/>
            <person name="Feuermann M."/>
            <person name="Pedruzzi I."/>
            <person name="Priebe S."/>
            <person name="Groth M."/>
            <person name="Winkler R."/>
            <person name="Li W."/>
            <person name="Kniemeyer O."/>
            <person name="Schroeckh V."/>
            <person name="Hertweck C."/>
            <person name="Hube B."/>
            <person name="White T.C."/>
            <person name="Platzer M."/>
            <person name="Guthke R."/>
            <person name="Heitman J."/>
            <person name="Woestemeyer J."/>
            <person name="Zipfel P.F."/>
            <person name="Monod M."/>
            <person name="Brakhage A.A."/>
        </authorList>
    </citation>
    <scope>NUCLEOTIDE SEQUENCE [LARGE SCALE GENOMIC DNA]</scope>
    <source>
        <strain>ATCC MYA-4681 / CBS 112371</strain>
    </source>
</reference>
<keyword id="KW-0472">Membrane</keyword>
<keyword id="KW-0496">Mitochondrion</keyword>
<keyword id="KW-0999">Mitochondrion inner membrane</keyword>
<keyword id="KW-1185">Reference proteome</keyword>
<keyword id="KW-0809">Transit peptide</keyword>
<organism>
    <name type="scientific">Arthroderma benhamiae (strain ATCC MYA-4681 / CBS 112371)</name>
    <name type="common">Trichophyton mentagrophytes</name>
    <dbReference type="NCBI Taxonomy" id="663331"/>
    <lineage>
        <taxon>Eukaryota</taxon>
        <taxon>Fungi</taxon>
        <taxon>Dikarya</taxon>
        <taxon>Ascomycota</taxon>
        <taxon>Pezizomycotina</taxon>
        <taxon>Eurotiomycetes</taxon>
        <taxon>Eurotiomycetidae</taxon>
        <taxon>Onygenales</taxon>
        <taxon>Arthrodermataceae</taxon>
        <taxon>Trichophyton</taxon>
    </lineage>
</organism>
<sequence length="704" mass="78489">MSGIALQGIRCHACRNAAFRSFAAISGLSSSIRRPQSSISYPGSKLYQRNVRTTGRRQFSTLGSVKSQVDSDLPTKTETKEDASAESSHIPWYLQDESHKPSSHPLKQQELPPLPENPPPILENLLQYISVDAGLDDLALLDLRGLDPPPALGANLIMIIGTARSVKHLNVSGDRLCRWLRSNYQLRPIADGLLGRNELKIKLRRRARKAKATGDASSLNSRDDGITTGWICVNVGDVENGPLKTKNSQDRNFIGFGGTEDKVRIVVQMLVEEKRSELQLEALWGSLLNPEAGEMNPAPRDDIWGNLSSETTSSRKGVDSIASTFSQRFPGRRHIHTQARPDTLEPLSHEILGNIVQESRPALPSKIVSTSMASPSVSSLLEQLSQLPEEEARRELGLGPGDRDSTLFLRLFYEAVSKSDTETVLIDKLSFARAAVLLKHPAYSKTDLYRAFKSMAASGCDISEELAMDTVRTLLSFQGPENAANERVPEQDIDLALRVLEHMSLRGIKIFNGEVFFLLHKASAFQSHVLPANDAPGATNTPADPDSISKVPVEELDHITTVHNRLSKLMASANVDFDYKDYPELLKMYFEHGNYSNFWRLWHRIPLMQIPRTKELYLLMFRLHAKLGHQRQAVDCLSSWVPMMAREQPPVALDEELTRDIMACMLVADPAIDQKTDDGTVSQFTRLWKQCLRDLKSFKAANSQ</sequence>
<feature type="transit peptide" description="Mitochondrion" evidence="2">
    <location>
        <begin position="1"/>
        <end position="59"/>
    </location>
</feature>
<feature type="chain" id="PRO_0000404458" description="ATPase synthesis protein 25, mitochondrial">
    <location>
        <begin position="60"/>
        <end position="704"/>
    </location>
</feature>
<feature type="region of interest" description="Disordered" evidence="3">
    <location>
        <begin position="57"/>
        <end position="118"/>
    </location>
</feature>
<feature type="compositionally biased region" description="Polar residues" evidence="3">
    <location>
        <begin position="57"/>
        <end position="72"/>
    </location>
</feature>
<feature type="compositionally biased region" description="Basic and acidic residues" evidence="3">
    <location>
        <begin position="73"/>
        <end position="83"/>
    </location>
</feature>
<evidence type="ECO:0000250" key="1"/>
<evidence type="ECO:0000255" key="2"/>
<evidence type="ECO:0000256" key="3">
    <source>
        <dbReference type="SAM" id="MobiDB-lite"/>
    </source>
</evidence>
<evidence type="ECO:0000305" key="4"/>
<comment type="function">
    <text evidence="1">Probable mitochondrial mRNA stabilization factor.</text>
</comment>
<comment type="subcellular location">
    <subcellularLocation>
        <location evidence="1">Mitochondrion inner membrane</location>
        <topology evidence="1">Peripheral membrane protein</topology>
        <orientation evidence="1">Matrix side</orientation>
    </subcellularLocation>
</comment>
<comment type="similarity">
    <text evidence="4">Belongs to the ATP25 family.</text>
</comment>
<proteinExistence type="inferred from homology"/>